<comment type="function">
    <text evidence="3 4 5">Binds to the sodium channels Nav1.1/SCN1A (EC(50)=453 nM), Nav1.5/SCN5A (EC(50)=440 nM) and Nav1.6/SCN8A (EC(50)=1740 nM), thereby delaying their inactivation (PubMed:21802465, Ref.1). Also inhibits Nav1.2/SCN2A, Nav1.3/SCN3A, and Nav1.4/SCN4A, but to a lesser extent (PubMed:21802465). Toxin effect on Nav1.1 and Nav1.6 (and on Nav1.5, but in a lesser extent) consists in an incomplete inactivation (PubMed:21802465).</text>
</comment>
<comment type="subcellular location">
    <subcellularLocation>
        <location evidence="9">Secreted</location>
    </subcellularLocation>
    <subcellularLocation>
        <location evidence="9">Nematocyst</location>
    </subcellularLocation>
</comment>
<comment type="mass spectrometry" mass="4781.32" method="MALDI" evidence="5"/>
<comment type="miscellaneous">
    <text evidence="4">Negative results: does not show activity on Nav1.7/SCN9A.</text>
</comment>
<comment type="similarity">
    <text evidence="2">Belongs to the sea anemone sodium channel inhibitory toxin family. Type I subfamily.</text>
</comment>
<comment type="caution">
    <text evidence="4">The sequence submitted as delta-AITX-Bcg1b (AC P86460) and renamed delta-AITX-Bcg1e is a deamidation product (at Asn-16 residue) of delta-AITX-Bcg1a (renamed delta-AITX-Bcg1d). This product does not show any activity on all Nav1 tested (Nav1.1 to Nav1.7).</text>
</comment>
<feature type="chain" id="PRO_0000392961" description="Delta-actitoxin-Bcg1d" evidence="5">
    <location>
        <begin position="1"/>
        <end position="47"/>
    </location>
</feature>
<feature type="site" description="Important for toxin activity on Nav channels" evidence="10">
    <location>
        <position position="16"/>
    </location>
</feature>
<feature type="disulfide bond" evidence="1">
    <location>
        <begin position="4"/>
        <end position="44"/>
    </location>
</feature>
<feature type="disulfide bond" evidence="1">
    <location>
        <begin position="6"/>
        <end position="34"/>
    </location>
</feature>
<feature type="disulfide bond" evidence="1">
    <location>
        <begin position="27"/>
        <end position="45"/>
    </location>
</feature>
<feature type="sequence conflict" description="In Ref. 1; AA sequence and 2; AA sequence." evidence="10" ref="1 2">
    <original>N</original>
    <variation>D</variation>
    <location>
        <position position="16"/>
    </location>
</feature>
<proteinExistence type="evidence at protein level"/>
<protein>
    <recommendedName>
        <fullName evidence="7">Delta-actitoxin-Bcg1d</fullName>
        <shortName evidence="7">Delta-AITX-Bcg1d</shortName>
    </recommendedName>
    <alternativeName>
        <fullName evidence="8">Delta-AITX-Bcg1a</fullName>
    </alternativeName>
    <alternativeName>
        <fullName evidence="8">Delta-AITX-Bcg1b</fullName>
    </alternativeName>
    <alternativeName>
        <fullName evidence="7">Delta-actitoxin-Bcg1e</fullName>
        <shortName evidence="7">Delta-AITX-Bcg1e</shortName>
    </alternativeName>
    <alternativeName>
        <fullName evidence="6">Toxin Bcg 30.24</fullName>
    </alternativeName>
</protein>
<organism>
    <name type="scientific">Bunodosoma cangicum</name>
    <name type="common">Sea anemone</name>
    <dbReference type="NCBI Taxonomy" id="138296"/>
    <lineage>
        <taxon>Eukaryota</taxon>
        <taxon>Metazoa</taxon>
        <taxon>Cnidaria</taxon>
        <taxon>Anthozoa</taxon>
        <taxon>Hexacorallia</taxon>
        <taxon>Actiniaria</taxon>
        <taxon>Actiniidae</taxon>
        <taxon>Bunodosoma</taxon>
    </lineage>
</organism>
<name>NA1D_BUNCN</name>
<keyword id="KW-0903">Direct protein sequencing</keyword>
<keyword id="KW-1015">Disulfide bond</keyword>
<keyword id="KW-0872">Ion channel impairing toxin</keyword>
<keyword id="KW-0166">Nematocyst</keyword>
<keyword id="KW-0528">Neurotoxin</keyword>
<keyword id="KW-0964">Secreted</keyword>
<keyword id="KW-0800">Toxin</keyword>
<keyword id="KW-0738">Voltage-gated sodium channel impairing toxin</keyword>
<reference key="1">
    <citation type="submission" date="2010-02" db="UniProtKB">
        <authorList>
            <person name="Zaharenko A.J."/>
            <person name="Schiavon E."/>
            <person name="Ferreira W.A. Jr."/>
            <person name="Freitas J.C."/>
            <person name="Richardson M."/>
            <person name="Wanke E."/>
        </authorList>
    </citation>
    <scope>PROTEIN SEQUENCE</scope>
    <scope>FUNCTION</scope>
    <scope>MASS SPECTROMETRY</scope>
    <source>
        <tissue>Venom</tissue>
    </source>
</reference>
<reference key="2">
    <citation type="journal article" date="2012" name="Peptides">
        <title>Characterization of selectivity and pharmacophores of type 1 sea anemone toxins by screening seven Na(v) sodium channel isoforms.</title>
        <authorList>
            <person name="Zaharenko A.J."/>
            <person name="Schiavon E."/>
            <person name="Ferreira W.A. Jr."/>
            <person name="Lecchi M."/>
            <person name="de Freitas J.C."/>
            <person name="Richardson M."/>
            <person name="Wanke E."/>
        </authorList>
    </citation>
    <scope>PROTEIN SEQUENCE</scope>
    <scope>FUNCTION</scope>
    <scope>MASS SPECTROMETRY</scope>
</reference>
<reference key="3">
    <citation type="journal article" date="2008" name="Comp. Biochem. Physiol.">
        <title>Proteomics of the neurotoxic fraction from the sea anemone Bunodosoma cangicum venom: novel peptides belonging to new classes of toxins.</title>
        <authorList>
            <person name="Zaharenko A.J."/>
            <person name="Ferreira W.A. Jr."/>
            <person name="Oliveira J.S."/>
            <person name="Richardson M."/>
            <person name="Pimenta D.C."/>
            <person name="Konno K."/>
            <person name="Portaro F.C."/>
            <person name="de Freitas J.C."/>
        </authorList>
    </citation>
    <scope>PROTEIN SEQUENCE OF 1-39</scope>
    <scope>FUNCTION</scope>
    <scope>SUBCELLULAR LOCATION</scope>
</reference>
<reference key="4">
    <citation type="journal article" date="2012" name="Toxicon">
        <title>Development of a rational nomenclature for naming peptide and protein toxins from sea anemones.</title>
        <authorList>
            <person name="Oliveira J.S."/>
            <person name="Fuentes-Silva D."/>
            <person name="King G.F."/>
        </authorList>
    </citation>
    <scope>NOMENCLATURE</scope>
</reference>
<accession>P86459</accession>
<accession>P86460</accession>
<dbReference type="SMR" id="P86459"/>
<dbReference type="GO" id="GO:0005576">
    <property type="term" value="C:extracellular region"/>
    <property type="evidence" value="ECO:0007669"/>
    <property type="project" value="UniProtKB-SubCell"/>
</dbReference>
<dbReference type="GO" id="GO:0042151">
    <property type="term" value="C:nematocyst"/>
    <property type="evidence" value="ECO:0007669"/>
    <property type="project" value="UniProtKB-SubCell"/>
</dbReference>
<dbReference type="GO" id="GO:0017080">
    <property type="term" value="F:sodium channel regulator activity"/>
    <property type="evidence" value="ECO:0007669"/>
    <property type="project" value="UniProtKB-KW"/>
</dbReference>
<dbReference type="GO" id="GO:0090729">
    <property type="term" value="F:toxin activity"/>
    <property type="evidence" value="ECO:0007669"/>
    <property type="project" value="UniProtKB-KW"/>
</dbReference>
<dbReference type="GO" id="GO:0009966">
    <property type="term" value="P:regulation of signal transduction"/>
    <property type="evidence" value="ECO:0007669"/>
    <property type="project" value="InterPro"/>
</dbReference>
<dbReference type="Gene3D" id="2.20.20.10">
    <property type="entry name" value="Anthopleurin-A"/>
    <property type="match status" value="1"/>
</dbReference>
<dbReference type="InterPro" id="IPR000693">
    <property type="entry name" value="Anenome_toxin"/>
</dbReference>
<dbReference type="InterPro" id="IPR023355">
    <property type="entry name" value="Myo_ane_neurotoxin_sf"/>
</dbReference>
<dbReference type="Pfam" id="PF00706">
    <property type="entry name" value="Toxin_4"/>
    <property type="match status" value="1"/>
</dbReference>
<dbReference type="PIRSF" id="PIRSF001905">
    <property type="entry name" value="Anenome_toxin"/>
    <property type="match status" value="1"/>
</dbReference>
<dbReference type="SUPFAM" id="SSF57392">
    <property type="entry name" value="Defensin-like"/>
    <property type="match status" value="1"/>
</dbReference>
<evidence type="ECO:0000250" key="1">
    <source>
        <dbReference type="UniProtKB" id="P01530"/>
    </source>
</evidence>
<evidence type="ECO:0000255" key="2"/>
<evidence type="ECO:0000269" key="3">
    <source>
    </source>
</evidence>
<evidence type="ECO:0000269" key="4">
    <source>
    </source>
</evidence>
<evidence type="ECO:0000269" key="5">
    <source ref="1"/>
</evidence>
<evidence type="ECO:0000303" key="6">
    <source>
    </source>
</evidence>
<evidence type="ECO:0000303" key="7">
    <source>
    </source>
</evidence>
<evidence type="ECO:0000303" key="8">
    <source ref="1"/>
</evidence>
<evidence type="ECO:0000305" key="9">
    <source>
    </source>
</evidence>
<evidence type="ECO:0000305" key="10">
    <source>
    </source>
</evidence>
<sequence length="47" mass="4786">GVPCLCDSDGPSVRGNTLSGTVWVFGCPSGWHICTSDGPTIGSCCKK</sequence>